<evidence type="ECO:0000255" key="1">
    <source>
        <dbReference type="HAMAP-Rule" id="MF_01850"/>
    </source>
</evidence>
<gene>
    <name evidence="1" type="primary">ttcA</name>
    <name type="ordered locus">Maqu_1793</name>
</gene>
<name>TTCA_MARN8</name>
<accession>A1U1K6</accession>
<keyword id="KW-0004">4Fe-4S</keyword>
<keyword id="KW-0067">ATP-binding</keyword>
<keyword id="KW-0963">Cytoplasm</keyword>
<keyword id="KW-0408">Iron</keyword>
<keyword id="KW-0411">Iron-sulfur</keyword>
<keyword id="KW-0460">Magnesium</keyword>
<keyword id="KW-0479">Metal-binding</keyword>
<keyword id="KW-0547">Nucleotide-binding</keyword>
<keyword id="KW-0694">RNA-binding</keyword>
<keyword id="KW-0808">Transferase</keyword>
<keyword id="KW-0819">tRNA processing</keyword>
<keyword id="KW-0820">tRNA-binding</keyword>
<proteinExistence type="inferred from homology"/>
<comment type="function">
    <text evidence="1">Catalyzes the ATP-dependent 2-thiolation of cytidine in position 32 of tRNA, to form 2-thiocytidine (s(2)C32). The sulfur atoms are provided by the cysteine/cysteine desulfurase (IscS) system.</text>
</comment>
<comment type="catalytic activity">
    <reaction evidence="1">
        <text>cytidine(32) in tRNA + S-sulfanyl-L-cysteinyl-[cysteine desulfurase] + AH2 + ATP = 2-thiocytidine(32) in tRNA + L-cysteinyl-[cysteine desulfurase] + A + AMP + diphosphate + H(+)</text>
        <dbReference type="Rhea" id="RHEA:57048"/>
        <dbReference type="Rhea" id="RHEA-COMP:10288"/>
        <dbReference type="Rhea" id="RHEA-COMP:12157"/>
        <dbReference type="Rhea" id="RHEA-COMP:12158"/>
        <dbReference type="Rhea" id="RHEA-COMP:14821"/>
        <dbReference type="ChEBI" id="CHEBI:13193"/>
        <dbReference type="ChEBI" id="CHEBI:15378"/>
        <dbReference type="ChEBI" id="CHEBI:17499"/>
        <dbReference type="ChEBI" id="CHEBI:29950"/>
        <dbReference type="ChEBI" id="CHEBI:30616"/>
        <dbReference type="ChEBI" id="CHEBI:33019"/>
        <dbReference type="ChEBI" id="CHEBI:61963"/>
        <dbReference type="ChEBI" id="CHEBI:82748"/>
        <dbReference type="ChEBI" id="CHEBI:141453"/>
        <dbReference type="ChEBI" id="CHEBI:456215"/>
    </reaction>
    <physiologicalReaction direction="left-to-right" evidence="1">
        <dbReference type="Rhea" id="RHEA:57049"/>
    </physiologicalReaction>
</comment>
<comment type="cofactor">
    <cofactor evidence="1">
        <name>Mg(2+)</name>
        <dbReference type="ChEBI" id="CHEBI:18420"/>
    </cofactor>
</comment>
<comment type="cofactor">
    <cofactor evidence="1">
        <name>[4Fe-4S] cluster</name>
        <dbReference type="ChEBI" id="CHEBI:49883"/>
    </cofactor>
    <text evidence="1">Binds 1 [4Fe-4S] cluster per subunit. The cluster is chelated by three Cys residues, the fourth Fe has a free coordination site that may bind a sulfur atom transferred from the persulfide of IscS.</text>
</comment>
<comment type="pathway">
    <text evidence="1">tRNA modification.</text>
</comment>
<comment type="subunit">
    <text evidence="1">Homodimer.</text>
</comment>
<comment type="subcellular location">
    <subcellularLocation>
        <location evidence="1">Cytoplasm</location>
    </subcellularLocation>
</comment>
<comment type="miscellaneous">
    <text evidence="1">The thiolation reaction likely consists of two steps: a first activation step by ATP to form an adenylated intermediate of the target base of tRNA, and a second nucleophilic substitution step of the sulfur (S) atom supplied by the hydrosulfide attached to the Fe-S cluster.</text>
</comment>
<comment type="similarity">
    <text evidence="1">Belongs to the TtcA family.</text>
</comment>
<organism>
    <name type="scientific">Marinobacter nauticus (strain ATCC 700491 / DSM 11845 / VT8)</name>
    <name type="common">Marinobacter aquaeolei</name>
    <dbReference type="NCBI Taxonomy" id="351348"/>
    <lineage>
        <taxon>Bacteria</taxon>
        <taxon>Pseudomonadati</taxon>
        <taxon>Pseudomonadota</taxon>
        <taxon>Gammaproteobacteria</taxon>
        <taxon>Pseudomonadales</taxon>
        <taxon>Marinobacteraceae</taxon>
        <taxon>Marinobacter</taxon>
    </lineage>
</organism>
<sequence>MPEAMTASPEKTPASDYERRQKLELNKLQKRLRREVGQAIADFSMIEAGDKVMCCLSGGKDSYAMLDILLNLQKSAPVRFELIAVNLDQKQPGFPEHVLPDYLESMGIEYHIIEKDTYSIVKEKVPEGKTTCGLCSRLRRGILYNFAEEHGVTKIALGHHRDDLLETLFLNMFYGGKLKSMPPVLHSDDGRNTVIRPLAYAREKDIARYASLREFPIIPCNLCGSQENLQRQVIKEMFQTWDKQHPGRLETMFRALCNVEPSHLADPELYDFREGRRLGGKRQAVQTAEPQQDFGRLDVLNL</sequence>
<reference key="1">
    <citation type="journal article" date="2011" name="Appl. Environ. Microbiol.">
        <title>Genomic potential of Marinobacter aquaeolei, a biogeochemical 'opportunitroph'.</title>
        <authorList>
            <person name="Singer E."/>
            <person name="Webb E.A."/>
            <person name="Nelson W.C."/>
            <person name="Heidelberg J.F."/>
            <person name="Ivanova N."/>
            <person name="Pati A."/>
            <person name="Edwards K.J."/>
        </authorList>
    </citation>
    <scope>NUCLEOTIDE SEQUENCE [LARGE SCALE GENOMIC DNA]</scope>
    <source>
        <strain>ATCC 700491 / DSM 11845 / VT8</strain>
    </source>
</reference>
<dbReference type="EC" id="2.8.1.-" evidence="1"/>
<dbReference type="EMBL" id="CP000514">
    <property type="protein sequence ID" value="ABM18875.1"/>
    <property type="molecule type" value="Genomic_DNA"/>
</dbReference>
<dbReference type="RefSeq" id="WP_011785273.1">
    <property type="nucleotide sequence ID" value="NC_008740.1"/>
</dbReference>
<dbReference type="SMR" id="A1U1K6"/>
<dbReference type="STRING" id="351348.Maqu_1793"/>
<dbReference type="GeneID" id="31820979"/>
<dbReference type="KEGG" id="maq:Maqu_1793"/>
<dbReference type="eggNOG" id="COG0037">
    <property type="taxonomic scope" value="Bacteria"/>
</dbReference>
<dbReference type="HOGENOM" id="CLU_026481_0_0_6"/>
<dbReference type="OrthoDB" id="9801054at2"/>
<dbReference type="Proteomes" id="UP000000998">
    <property type="component" value="Chromosome"/>
</dbReference>
<dbReference type="GO" id="GO:0005737">
    <property type="term" value="C:cytoplasm"/>
    <property type="evidence" value="ECO:0007669"/>
    <property type="project" value="UniProtKB-SubCell"/>
</dbReference>
<dbReference type="GO" id="GO:0051539">
    <property type="term" value="F:4 iron, 4 sulfur cluster binding"/>
    <property type="evidence" value="ECO:0007669"/>
    <property type="project" value="UniProtKB-UniRule"/>
</dbReference>
<dbReference type="GO" id="GO:0005524">
    <property type="term" value="F:ATP binding"/>
    <property type="evidence" value="ECO:0007669"/>
    <property type="project" value="UniProtKB-UniRule"/>
</dbReference>
<dbReference type="GO" id="GO:0000287">
    <property type="term" value="F:magnesium ion binding"/>
    <property type="evidence" value="ECO:0007669"/>
    <property type="project" value="UniProtKB-UniRule"/>
</dbReference>
<dbReference type="GO" id="GO:0016783">
    <property type="term" value="F:sulfurtransferase activity"/>
    <property type="evidence" value="ECO:0007669"/>
    <property type="project" value="UniProtKB-UniRule"/>
</dbReference>
<dbReference type="GO" id="GO:0000049">
    <property type="term" value="F:tRNA binding"/>
    <property type="evidence" value="ECO:0007669"/>
    <property type="project" value="UniProtKB-KW"/>
</dbReference>
<dbReference type="GO" id="GO:0034227">
    <property type="term" value="P:tRNA thio-modification"/>
    <property type="evidence" value="ECO:0007669"/>
    <property type="project" value="UniProtKB-UniRule"/>
</dbReference>
<dbReference type="CDD" id="cd24138">
    <property type="entry name" value="TtcA-like"/>
    <property type="match status" value="1"/>
</dbReference>
<dbReference type="Gene3D" id="3.40.50.620">
    <property type="entry name" value="HUPs"/>
    <property type="match status" value="1"/>
</dbReference>
<dbReference type="HAMAP" id="MF_01850">
    <property type="entry name" value="TtcA"/>
    <property type="match status" value="1"/>
</dbReference>
<dbReference type="InterPro" id="IPR014729">
    <property type="entry name" value="Rossmann-like_a/b/a_fold"/>
</dbReference>
<dbReference type="InterPro" id="IPR011063">
    <property type="entry name" value="TilS/TtcA_N"/>
</dbReference>
<dbReference type="InterPro" id="IPR012089">
    <property type="entry name" value="tRNA_Cyd_32_2_STrfase"/>
</dbReference>
<dbReference type="InterPro" id="IPR035107">
    <property type="entry name" value="tRNA_thiolation_TtcA_Ctu1"/>
</dbReference>
<dbReference type="NCBIfam" id="NF007972">
    <property type="entry name" value="PRK10696.1"/>
    <property type="match status" value="1"/>
</dbReference>
<dbReference type="PANTHER" id="PTHR43686:SF1">
    <property type="entry name" value="AMINOTRAN_5 DOMAIN-CONTAINING PROTEIN"/>
    <property type="match status" value="1"/>
</dbReference>
<dbReference type="PANTHER" id="PTHR43686">
    <property type="entry name" value="SULFURTRANSFERASE-RELATED"/>
    <property type="match status" value="1"/>
</dbReference>
<dbReference type="Pfam" id="PF01171">
    <property type="entry name" value="ATP_bind_3"/>
    <property type="match status" value="1"/>
</dbReference>
<dbReference type="PIRSF" id="PIRSF004976">
    <property type="entry name" value="ATPase_YdaO"/>
    <property type="match status" value="1"/>
</dbReference>
<dbReference type="SUPFAM" id="SSF52402">
    <property type="entry name" value="Adenine nucleotide alpha hydrolases-like"/>
    <property type="match status" value="1"/>
</dbReference>
<feature type="chain" id="PRO_0000348764" description="tRNA-cytidine(32) 2-sulfurtransferase">
    <location>
        <begin position="1"/>
        <end position="302"/>
    </location>
</feature>
<feature type="short sequence motif" description="PP-loop motif" evidence="1">
    <location>
        <begin position="57"/>
        <end position="62"/>
    </location>
</feature>
<feature type="binding site" evidence="1">
    <location>
        <position position="132"/>
    </location>
    <ligand>
        <name>[4Fe-4S] cluster</name>
        <dbReference type="ChEBI" id="CHEBI:49883"/>
    </ligand>
</feature>
<feature type="binding site" evidence="1">
    <location>
        <position position="135"/>
    </location>
    <ligand>
        <name>[4Fe-4S] cluster</name>
        <dbReference type="ChEBI" id="CHEBI:49883"/>
    </ligand>
</feature>
<feature type="binding site" evidence="1">
    <location>
        <position position="223"/>
    </location>
    <ligand>
        <name>[4Fe-4S] cluster</name>
        <dbReference type="ChEBI" id="CHEBI:49883"/>
    </ligand>
</feature>
<protein>
    <recommendedName>
        <fullName evidence="1">tRNA-cytidine(32) 2-sulfurtransferase</fullName>
        <ecNumber evidence="1">2.8.1.-</ecNumber>
    </recommendedName>
    <alternativeName>
        <fullName evidence="1">Two-thiocytidine biosynthesis protein A</fullName>
    </alternativeName>
    <alternativeName>
        <fullName evidence="1">tRNA 2-thiocytidine biosynthesis protein TtcA</fullName>
    </alternativeName>
</protein>